<name>SYH_SACS2</name>
<dbReference type="EC" id="6.1.1.21" evidence="1"/>
<dbReference type="EMBL" id="AE006641">
    <property type="protein sequence ID" value="AAK40617.1"/>
    <property type="molecule type" value="Genomic_DNA"/>
</dbReference>
<dbReference type="PIR" id="B90170">
    <property type="entry name" value="B90170"/>
</dbReference>
<dbReference type="RefSeq" id="WP_009990560.1">
    <property type="nucleotide sequence ID" value="NC_002754.1"/>
</dbReference>
<dbReference type="SMR" id="Q980L3"/>
<dbReference type="FunCoup" id="Q980L3">
    <property type="interactions" value="273"/>
</dbReference>
<dbReference type="STRING" id="273057.SSO0279"/>
<dbReference type="PaxDb" id="273057-SSO0279"/>
<dbReference type="EnsemblBacteria" id="AAK40617">
    <property type="protein sequence ID" value="AAK40617"/>
    <property type="gene ID" value="SSO0279"/>
</dbReference>
<dbReference type="GeneID" id="44129250"/>
<dbReference type="KEGG" id="sso:SSO0279"/>
<dbReference type="PATRIC" id="fig|273057.12.peg.273"/>
<dbReference type="eggNOG" id="arCOG00404">
    <property type="taxonomic scope" value="Archaea"/>
</dbReference>
<dbReference type="HOGENOM" id="CLU_025113_3_1_2"/>
<dbReference type="InParanoid" id="Q980L3"/>
<dbReference type="PhylomeDB" id="Q980L3"/>
<dbReference type="Proteomes" id="UP000001974">
    <property type="component" value="Chromosome"/>
</dbReference>
<dbReference type="GO" id="GO:0005737">
    <property type="term" value="C:cytoplasm"/>
    <property type="evidence" value="ECO:0007669"/>
    <property type="project" value="UniProtKB-SubCell"/>
</dbReference>
<dbReference type="GO" id="GO:0005524">
    <property type="term" value="F:ATP binding"/>
    <property type="evidence" value="ECO:0007669"/>
    <property type="project" value="UniProtKB-UniRule"/>
</dbReference>
<dbReference type="GO" id="GO:0004821">
    <property type="term" value="F:histidine-tRNA ligase activity"/>
    <property type="evidence" value="ECO:0000318"/>
    <property type="project" value="GO_Central"/>
</dbReference>
<dbReference type="GO" id="GO:0006427">
    <property type="term" value="P:histidyl-tRNA aminoacylation"/>
    <property type="evidence" value="ECO:0000318"/>
    <property type="project" value="GO_Central"/>
</dbReference>
<dbReference type="GO" id="GO:0000105">
    <property type="term" value="P:L-histidine biosynthetic process"/>
    <property type="evidence" value="ECO:0007669"/>
    <property type="project" value="InterPro"/>
</dbReference>
<dbReference type="CDD" id="cd00773">
    <property type="entry name" value="HisRS-like_core"/>
    <property type="match status" value="1"/>
</dbReference>
<dbReference type="FunFam" id="3.30.930.10:FF:000121">
    <property type="entry name" value="Histidine--tRNA ligase"/>
    <property type="match status" value="1"/>
</dbReference>
<dbReference type="Gene3D" id="3.40.50.800">
    <property type="entry name" value="Anticodon-binding domain"/>
    <property type="match status" value="1"/>
</dbReference>
<dbReference type="Gene3D" id="3.30.930.10">
    <property type="entry name" value="Bira Bifunctional Protein, Domain 2"/>
    <property type="match status" value="1"/>
</dbReference>
<dbReference type="HAMAP" id="MF_00127">
    <property type="entry name" value="His_tRNA_synth"/>
    <property type="match status" value="1"/>
</dbReference>
<dbReference type="HAMAP" id="MF_00125">
    <property type="entry name" value="HisZ"/>
    <property type="match status" value="1"/>
</dbReference>
<dbReference type="InterPro" id="IPR006195">
    <property type="entry name" value="aa-tRNA-synth_II"/>
</dbReference>
<dbReference type="InterPro" id="IPR045864">
    <property type="entry name" value="aa-tRNA-synth_II/BPL/LPL"/>
</dbReference>
<dbReference type="InterPro" id="IPR004154">
    <property type="entry name" value="Anticodon-bd"/>
</dbReference>
<dbReference type="InterPro" id="IPR036621">
    <property type="entry name" value="Anticodon-bd_dom_sf"/>
</dbReference>
<dbReference type="InterPro" id="IPR015807">
    <property type="entry name" value="His-tRNA-ligase"/>
</dbReference>
<dbReference type="InterPro" id="IPR041715">
    <property type="entry name" value="HisRS-like_core"/>
</dbReference>
<dbReference type="InterPro" id="IPR004516">
    <property type="entry name" value="HisRS/HisZ"/>
</dbReference>
<dbReference type="InterPro" id="IPR004517">
    <property type="entry name" value="HisZ"/>
</dbReference>
<dbReference type="NCBIfam" id="TIGR00442">
    <property type="entry name" value="hisS"/>
    <property type="match status" value="1"/>
</dbReference>
<dbReference type="PANTHER" id="PTHR43707:SF1">
    <property type="entry name" value="HISTIDINE--TRNA LIGASE, MITOCHONDRIAL-RELATED"/>
    <property type="match status" value="1"/>
</dbReference>
<dbReference type="PANTHER" id="PTHR43707">
    <property type="entry name" value="HISTIDYL-TRNA SYNTHETASE"/>
    <property type="match status" value="1"/>
</dbReference>
<dbReference type="Pfam" id="PF03129">
    <property type="entry name" value="HGTP_anticodon"/>
    <property type="match status" value="1"/>
</dbReference>
<dbReference type="Pfam" id="PF13393">
    <property type="entry name" value="tRNA-synt_His"/>
    <property type="match status" value="1"/>
</dbReference>
<dbReference type="PIRSF" id="PIRSF001549">
    <property type="entry name" value="His-tRNA_synth"/>
    <property type="match status" value="1"/>
</dbReference>
<dbReference type="SUPFAM" id="SSF52954">
    <property type="entry name" value="Class II aaRS ABD-related"/>
    <property type="match status" value="1"/>
</dbReference>
<dbReference type="SUPFAM" id="SSF55681">
    <property type="entry name" value="Class II aaRS and biotin synthetases"/>
    <property type="match status" value="1"/>
</dbReference>
<dbReference type="PROSITE" id="PS50862">
    <property type="entry name" value="AA_TRNA_LIGASE_II"/>
    <property type="match status" value="1"/>
</dbReference>
<reference key="1">
    <citation type="journal article" date="2001" name="Proc. Natl. Acad. Sci. U.S.A.">
        <title>The complete genome of the crenarchaeon Sulfolobus solfataricus P2.</title>
        <authorList>
            <person name="She Q."/>
            <person name="Singh R.K."/>
            <person name="Confalonieri F."/>
            <person name="Zivanovic Y."/>
            <person name="Allard G."/>
            <person name="Awayez M.J."/>
            <person name="Chan-Weiher C.C.-Y."/>
            <person name="Clausen I.G."/>
            <person name="Curtis B.A."/>
            <person name="De Moors A."/>
            <person name="Erauso G."/>
            <person name="Fletcher C."/>
            <person name="Gordon P.M.K."/>
            <person name="Heikamp-de Jong I."/>
            <person name="Jeffries A.C."/>
            <person name="Kozera C.J."/>
            <person name="Medina N."/>
            <person name="Peng X."/>
            <person name="Thi-Ngoc H.P."/>
            <person name="Redder P."/>
            <person name="Schenk M.E."/>
            <person name="Theriault C."/>
            <person name="Tolstrup N."/>
            <person name="Charlebois R.L."/>
            <person name="Doolittle W.F."/>
            <person name="Duguet M."/>
            <person name="Gaasterland T."/>
            <person name="Garrett R.A."/>
            <person name="Ragan M.A."/>
            <person name="Sensen C.W."/>
            <person name="Van der Oost J."/>
        </authorList>
    </citation>
    <scope>NUCLEOTIDE SEQUENCE [LARGE SCALE GENOMIC DNA]</scope>
    <source>
        <strain>ATCC 35092 / DSM 1617 / JCM 11322 / P2</strain>
    </source>
</reference>
<protein>
    <recommendedName>
        <fullName evidence="1">Histidine--tRNA ligase</fullName>
        <ecNumber evidence="1">6.1.1.21</ecNumber>
    </recommendedName>
    <alternativeName>
        <fullName evidence="1">Histidyl-tRNA synthetase</fullName>
        <shortName evidence="1">HisRS</shortName>
    </alternativeName>
</protein>
<gene>
    <name evidence="1" type="primary">hisS</name>
    <name type="ordered locus">SSO0279</name>
</gene>
<evidence type="ECO:0000255" key="1">
    <source>
        <dbReference type="HAMAP-Rule" id="MF_00127"/>
    </source>
</evidence>
<proteinExistence type="inferred from homology"/>
<accession>Q980L3</accession>
<organism>
    <name type="scientific">Saccharolobus solfataricus (strain ATCC 35092 / DSM 1617 / JCM 11322 / P2)</name>
    <name type="common">Sulfolobus solfataricus</name>
    <dbReference type="NCBI Taxonomy" id="273057"/>
    <lineage>
        <taxon>Archaea</taxon>
        <taxon>Thermoproteota</taxon>
        <taxon>Thermoprotei</taxon>
        <taxon>Sulfolobales</taxon>
        <taxon>Sulfolobaceae</taxon>
        <taxon>Saccharolobus</taxon>
    </lineage>
</organism>
<feature type="chain" id="PRO_0000136326" description="Histidine--tRNA ligase">
    <location>
        <begin position="1"/>
        <end position="426"/>
    </location>
</feature>
<keyword id="KW-0030">Aminoacyl-tRNA synthetase</keyword>
<keyword id="KW-0067">ATP-binding</keyword>
<keyword id="KW-0963">Cytoplasm</keyword>
<keyword id="KW-0436">Ligase</keyword>
<keyword id="KW-0547">Nucleotide-binding</keyword>
<keyword id="KW-0648">Protein biosynthesis</keyword>
<keyword id="KW-1185">Reference proteome</keyword>
<sequence>MVKFETVRGMKDYIGIDAEKIRYLESTFRDLAKKYGYSEIITPVVEEFKLFELKGGEELRQTMYVFKDKADREISLRPEITPSVARAYIQNLQSSPKPIRLFYFGTVYRYDEPQYGRYREFRQAGIEMIGDSSILADVEVLDLLYNFYDKLNLSKDITIKINNIGIFRKIMDKYNIEDNLQEHVLHLIDKNKVDEALVILEKNIKNKDIMDFLNMILTKKEAKLEDIESLAELEEVSKLDIKNEFEYLLRLSRILSSLNVKFKVDLGFVRGLAYYTGLIFEVLHPSVQFSIAGGGRYDKLIELYGGLPSPAIGFAIGVERTLLVIKDLKVEEPINVIVVGISEEAIPAMFTVSRMLRKEEYKVVINTKDQPLSKLLPYYASQGFKLAIIIGKQELEKNMITVRNLITRKQISIPLENVLDAIKQTL</sequence>
<comment type="catalytic activity">
    <reaction evidence="1">
        <text>tRNA(His) + L-histidine + ATP = L-histidyl-tRNA(His) + AMP + diphosphate + H(+)</text>
        <dbReference type="Rhea" id="RHEA:17313"/>
        <dbReference type="Rhea" id="RHEA-COMP:9665"/>
        <dbReference type="Rhea" id="RHEA-COMP:9689"/>
        <dbReference type="ChEBI" id="CHEBI:15378"/>
        <dbReference type="ChEBI" id="CHEBI:30616"/>
        <dbReference type="ChEBI" id="CHEBI:33019"/>
        <dbReference type="ChEBI" id="CHEBI:57595"/>
        <dbReference type="ChEBI" id="CHEBI:78442"/>
        <dbReference type="ChEBI" id="CHEBI:78527"/>
        <dbReference type="ChEBI" id="CHEBI:456215"/>
        <dbReference type="EC" id="6.1.1.21"/>
    </reaction>
</comment>
<comment type="subcellular location">
    <subcellularLocation>
        <location evidence="1">Cytoplasm</location>
    </subcellularLocation>
</comment>
<comment type="similarity">
    <text evidence="1">Belongs to the class-II aminoacyl-tRNA synthetase family.</text>
</comment>